<dbReference type="EC" id="2.7.2.8" evidence="1"/>
<dbReference type="EMBL" id="CP000462">
    <property type="protein sequence ID" value="ABK38661.1"/>
    <property type="molecule type" value="Genomic_DNA"/>
</dbReference>
<dbReference type="RefSeq" id="WP_011704561.1">
    <property type="nucleotide sequence ID" value="NC_008570.1"/>
</dbReference>
<dbReference type="RefSeq" id="YP_855127.1">
    <property type="nucleotide sequence ID" value="NC_008570.1"/>
</dbReference>
<dbReference type="SMR" id="A0KFV1"/>
<dbReference type="STRING" id="380703.AHA_0594"/>
<dbReference type="EnsemblBacteria" id="ABK38661">
    <property type="protein sequence ID" value="ABK38661"/>
    <property type="gene ID" value="AHA_0594"/>
</dbReference>
<dbReference type="GeneID" id="4489261"/>
<dbReference type="KEGG" id="aha:AHA_0594"/>
<dbReference type="PATRIC" id="fig|380703.7.peg.591"/>
<dbReference type="eggNOG" id="COG0548">
    <property type="taxonomic scope" value="Bacteria"/>
</dbReference>
<dbReference type="HOGENOM" id="CLU_053680_1_1_6"/>
<dbReference type="OrthoDB" id="5915023at2"/>
<dbReference type="UniPathway" id="UPA00068">
    <property type="reaction ID" value="UER00107"/>
</dbReference>
<dbReference type="Proteomes" id="UP000000756">
    <property type="component" value="Chromosome"/>
</dbReference>
<dbReference type="GO" id="GO:0005737">
    <property type="term" value="C:cytoplasm"/>
    <property type="evidence" value="ECO:0007669"/>
    <property type="project" value="UniProtKB-SubCell"/>
</dbReference>
<dbReference type="GO" id="GO:0003991">
    <property type="term" value="F:acetylglutamate kinase activity"/>
    <property type="evidence" value="ECO:0007669"/>
    <property type="project" value="UniProtKB-UniRule"/>
</dbReference>
<dbReference type="GO" id="GO:0005524">
    <property type="term" value="F:ATP binding"/>
    <property type="evidence" value="ECO:0007669"/>
    <property type="project" value="UniProtKB-UniRule"/>
</dbReference>
<dbReference type="GO" id="GO:0042450">
    <property type="term" value="P:arginine biosynthetic process via ornithine"/>
    <property type="evidence" value="ECO:0007669"/>
    <property type="project" value="UniProtKB-UniRule"/>
</dbReference>
<dbReference type="GO" id="GO:0006526">
    <property type="term" value="P:L-arginine biosynthetic process"/>
    <property type="evidence" value="ECO:0007669"/>
    <property type="project" value="UniProtKB-UniPathway"/>
</dbReference>
<dbReference type="Gene3D" id="3.40.1160.10">
    <property type="entry name" value="Acetylglutamate kinase-like"/>
    <property type="match status" value="1"/>
</dbReference>
<dbReference type="HAMAP" id="MF_00082">
    <property type="entry name" value="ArgB"/>
    <property type="match status" value="1"/>
</dbReference>
<dbReference type="InterPro" id="IPR036393">
    <property type="entry name" value="AceGlu_kinase-like_sf"/>
</dbReference>
<dbReference type="InterPro" id="IPR004662">
    <property type="entry name" value="AcgluKinase_fam"/>
</dbReference>
<dbReference type="InterPro" id="IPR037528">
    <property type="entry name" value="ArgB"/>
</dbReference>
<dbReference type="InterPro" id="IPR001048">
    <property type="entry name" value="Asp/Glu/Uridylate_kinase"/>
</dbReference>
<dbReference type="NCBIfam" id="TIGR00761">
    <property type="entry name" value="argB"/>
    <property type="match status" value="1"/>
</dbReference>
<dbReference type="PANTHER" id="PTHR23342">
    <property type="entry name" value="N-ACETYLGLUTAMATE SYNTHASE"/>
    <property type="match status" value="1"/>
</dbReference>
<dbReference type="PANTHER" id="PTHR23342:SF0">
    <property type="entry name" value="N-ACETYLGLUTAMATE SYNTHASE, MITOCHONDRIAL"/>
    <property type="match status" value="1"/>
</dbReference>
<dbReference type="Pfam" id="PF00696">
    <property type="entry name" value="AA_kinase"/>
    <property type="match status" value="1"/>
</dbReference>
<dbReference type="PIRSF" id="PIRSF000728">
    <property type="entry name" value="NAGK"/>
    <property type="match status" value="1"/>
</dbReference>
<dbReference type="SUPFAM" id="SSF53633">
    <property type="entry name" value="Carbamate kinase-like"/>
    <property type="match status" value="1"/>
</dbReference>
<proteinExistence type="inferred from homology"/>
<protein>
    <recommendedName>
        <fullName evidence="1">Acetylglutamate kinase</fullName>
        <ecNumber evidence="1">2.7.2.8</ecNumber>
    </recommendedName>
    <alternativeName>
        <fullName evidence="1">N-acetyl-L-glutamate 5-phosphotransferase</fullName>
    </alternativeName>
    <alternativeName>
        <fullName evidence="1">NAG kinase</fullName>
        <shortName evidence="1">NAGK</shortName>
    </alternativeName>
</protein>
<gene>
    <name evidence="1" type="primary">argB</name>
    <name type="ordered locus">AHA_0594</name>
</gene>
<feature type="chain" id="PRO_1000092845" description="Acetylglutamate kinase">
    <location>
        <begin position="1"/>
        <end position="259"/>
    </location>
</feature>
<feature type="binding site" evidence="1">
    <location>
        <begin position="45"/>
        <end position="46"/>
    </location>
    <ligand>
        <name>substrate</name>
    </ligand>
</feature>
<feature type="binding site" evidence="1">
    <location>
        <position position="67"/>
    </location>
    <ligand>
        <name>substrate</name>
    </ligand>
</feature>
<feature type="binding site" evidence="1">
    <location>
        <position position="159"/>
    </location>
    <ligand>
        <name>substrate</name>
    </ligand>
</feature>
<feature type="site" description="Transition state stabilizer" evidence="1">
    <location>
        <position position="9"/>
    </location>
</feature>
<feature type="site" description="Transition state stabilizer" evidence="1">
    <location>
        <position position="218"/>
    </location>
</feature>
<sequence length="259" mass="26455">MDKQTLVIKLGGALIENDEALTALFATLKTFLDEQHRPLVLVHGGGCLVDDLLKGLGLTSTKKNGLRVTPFEQIPFIAGALAGTANKMMMAKAIATDIPAVGLCLADGGLCQVTQLDPALGAVGDCQPGNPALVTGILGQGFLPVVSSIGITAQGQLMNVNADQAATAIAEALGADLVMLSDVSGILDGKGKLVPQLDKVTALDLMEKGVISDGMAVKVKAALHAAETLGKPVCVASWRYPDQLLKLLAGGAVGTQVAI</sequence>
<reference key="1">
    <citation type="journal article" date="2006" name="J. Bacteriol.">
        <title>Genome sequence of Aeromonas hydrophila ATCC 7966T: jack of all trades.</title>
        <authorList>
            <person name="Seshadri R."/>
            <person name="Joseph S.W."/>
            <person name="Chopra A.K."/>
            <person name="Sha J."/>
            <person name="Shaw J."/>
            <person name="Graf J."/>
            <person name="Haft D.H."/>
            <person name="Wu M."/>
            <person name="Ren Q."/>
            <person name="Rosovitz M.J."/>
            <person name="Madupu R."/>
            <person name="Tallon L."/>
            <person name="Kim M."/>
            <person name="Jin S."/>
            <person name="Vuong H."/>
            <person name="Stine O.C."/>
            <person name="Ali A."/>
            <person name="Horneman A.J."/>
            <person name="Heidelberg J.F."/>
        </authorList>
    </citation>
    <scope>NUCLEOTIDE SEQUENCE [LARGE SCALE GENOMIC DNA]</scope>
    <source>
        <strain>ATCC 7966 / DSM 30187 / BCRC 13018 / CCUG 14551 / JCM 1027 / KCTC 2358 / NCIMB 9240 / NCTC 8049</strain>
    </source>
</reference>
<evidence type="ECO:0000255" key="1">
    <source>
        <dbReference type="HAMAP-Rule" id="MF_00082"/>
    </source>
</evidence>
<organism>
    <name type="scientific">Aeromonas hydrophila subsp. hydrophila (strain ATCC 7966 / DSM 30187 / BCRC 13018 / CCUG 14551 / JCM 1027 / KCTC 2358 / NCIMB 9240 / NCTC 8049)</name>
    <dbReference type="NCBI Taxonomy" id="380703"/>
    <lineage>
        <taxon>Bacteria</taxon>
        <taxon>Pseudomonadati</taxon>
        <taxon>Pseudomonadota</taxon>
        <taxon>Gammaproteobacteria</taxon>
        <taxon>Aeromonadales</taxon>
        <taxon>Aeromonadaceae</taxon>
        <taxon>Aeromonas</taxon>
    </lineage>
</organism>
<keyword id="KW-0028">Amino-acid biosynthesis</keyword>
<keyword id="KW-0055">Arginine biosynthesis</keyword>
<keyword id="KW-0067">ATP-binding</keyword>
<keyword id="KW-0963">Cytoplasm</keyword>
<keyword id="KW-0418">Kinase</keyword>
<keyword id="KW-0547">Nucleotide-binding</keyword>
<keyword id="KW-1185">Reference proteome</keyword>
<keyword id="KW-0808">Transferase</keyword>
<accession>A0KFV1</accession>
<comment type="function">
    <text evidence="1">Catalyzes the ATP-dependent phosphorylation of N-acetyl-L-glutamate.</text>
</comment>
<comment type="catalytic activity">
    <reaction evidence="1">
        <text>N-acetyl-L-glutamate + ATP = N-acetyl-L-glutamyl 5-phosphate + ADP</text>
        <dbReference type="Rhea" id="RHEA:14629"/>
        <dbReference type="ChEBI" id="CHEBI:30616"/>
        <dbReference type="ChEBI" id="CHEBI:44337"/>
        <dbReference type="ChEBI" id="CHEBI:57936"/>
        <dbReference type="ChEBI" id="CHEBI:456216"/>
        <dbReference type="EC" id="2.7.2.8"/>
    </reaction>
</comment>
<comment type="pathway">
    <text evidence="1">Amino-acid biosynthesis; L-arginine biosynthesis; N(2)-acetyl-L-ornithine from L-glutamate: step 2/4.</text>
</comment>
<comment type="subcellular location">
    <subcellularLocation>
        <location evidence="1">Cytoplasm</location>
    </subcellularLocation>
</comment>
<comment type="similarity">
    <text evidence="1">Belongs to the acetylglutamate kinase family. ArgB subfamily.</text>
</comment>
<name>ARGB_AERHH</name>